<comment type="function">
    <text evidence="3">Suppress platelet aggregation induced by ADP, collagen, thrombin, and epinephrine (IC(50)=170-330 nM). Also dose-dependently inhibits the adhesion of human melanoma cells to fibrinogen but not to fibronectin.</text>
</comment>
<comment type="subunit">
    <text evidence="3">Homodimer.</text>
</comment>
<comment type="subcellular location">
    <subcellularLocation>
        <location evidence="3">Secreted</location>
    </subcellularLocation>
</comment>
<comment type="tissue specificity">
    <text evidence="6">Expressed by the venom gland.</text>
</comment>
<comment type="miscellaneous">
    <text>The disintegrin belongs to the dimeric disintegrin subfamily.</text>
</comment>
<comment type="similarity">
    <text evidence="5">Belongs to the venom metalloproteinase (M12B) family. P-II subfamily. P-IId sub-subfamily.</text>
</comment>
<name>VM2I2_GLOUS</name>
<proteinExistence type="evidence at protein level"/>
<protein>
    <recommendedName>
        <fullName evidence="4">Disintegrin ussuristatin-2</fullName>
        <shortName evidence="4">US-2</shortName>
    </recommendedName>
</protein>
<sequence>EAGEECDCGAPANPCCDAATCKLRPGAQCAEGDCCEQCRFVKEGTVCREAKGDWNDDSCTGQSADCPRNGF</sequence>
<dbReference type="PIR" id="A59412">
    <property type="entry name" value="A59412"/>
</dbReference>
<dbReference type="SMR" id="Q7LZT4"/>
<dbReference type="GO" id="GO:0005576">
    <property type="term" value="C:extracellular region"/>
    <property type="evidence" value="ECO:0007669"/>
    <property type="project" value="UniProtKB-SubCell"/>
</dbReference>
<dbReference type="GO" id="GO:0005886">
    <property type="term" value="C:plasma membrane"/>
    <property type="evidence" value="ECO:0007669"/>
    <property type="project" value="TreeGrafter"/>
</dbReference>
<dbReference type="GO" id="GO:0090729">
    <property type="term" value="F:toxin activity"/>
    <property type="evidence" value="ECO:0007669"/>
    <property type="project" value="UniProtKB-KW"/>
</dbReference>
<dbReference type="FunFam" id="4.10.70.10:FF:000005">
    <property type="entry name" value="Zinc metalloproteinase/disintegrin"/>
    <property type="match status" value="1"/>
</dbReference>
<dbReference type="Gene3D" id="4.10.70.10">
    <property type="entry name" value="Disintegrin domain"/>
    <property type="match status" value="1"/>
</dbReference>
<dbReference type="InterPro" id="IPR018358">
    <property type="entry name" value="Disintegrin_CS"/>
</dbReference>
<dbReference type="InterPro" id="IPR001762">
    <property type="entry name" value="Disintegrin_dom"/>
</dbReference>
<dbReference type="InterPro" id="IPR036436">
    <property type="entry name" value="Disintegrin_dom_sf"/>
</dbReference>
<dbReference type="PANTHER" id="PTHR11905">
    <property type="entry name" value="ADAM A DISINTEGRIN AND METALLOPROTEASE DOMAIN"/>
    <property type="match status" value="1"/>
</dbReference>
<dbReference type="PANTHER" id="PTHR11905:SF32">
    <property type="entry name" value="DISINTEGRIN AND METALLOPROTEINASE DOMAIN-CONTAINING PROTEIN 28"/>
    <property type="match status" value="1"/>
</dbReference>
<dbReference type="Pfam" id="PF00200">
    <property type="entry name" value="Disintegrin"/>
    <property type="match status" value="1"/>
</dbReference>
<dbReference type="PRINTS" id="PR00289">
    <property type="entry name" value="DISINTEGRIN"/>
</dbReference>
<dbReference type="SMART" id="SM00050">
    <property type="entry name" value="DISIN"/>
    <property type="match status" value="1"/>
</dbReference>
<dbReference type="SUPFAM" id="SSF57552">
    <property type="entry name" value="Blood coagulation inhibitor (disintegrin)"/>
    <property type="match status" value="1"/>
</dbReference>
<dbReference type="PROSITE" id="PS00427">
    <property type="entry name" value="DISINTEGRIN_1"/>
    <property type="match status" value="1"/>
</dbReference>
<dbReference type="PROSITE" id="PS50214">
    <property type="entry name" value="DISINTEGRIN_2"/>
    <property type="match status" value="1"/>
</dbReference>
<organism>
    <name type="scientific">Gloydius ussuriensis</name>
    <name type="common">Ussuri mamushi</name>
    <name type="synonym">Gloydius blomhoffii ussuriensis</name>
    <dbReference type="NCBI Taxonomy" id="35671"/>
    <lineage>
        <taxon>Eukaryota</taxon>
        <taxon>Metazoa</taxon>
        <taxon>Chordata</taxon>
        <taxon>Craniata</taxon>
        <taxon>Vertebrata</taxon>
        <taxon>Euteleostomi</taxon>
        <taxon>Lepidosauria</taxon>
        <taxon>Squamata</taxon>
        <taxon>Bifurcata</taxon>
        <taxon>Unidentata</taxon>
        <taxon>Episquamata</taxon>
        <taxon>Toxicofera</taxon>
        <taxon>Serpentes</taxon>
        <taxon>Colubroidea</taxon>
        <taxon>Viperidae</taxon>
        <taxon>Crotalinae</taxon>
        <taxon>Gloydius</taxon>
    </lineage>
</organism>
<feature type="chain" id="PRO_0000101781" description="Disintegrin ussuristatin-2" evidence="3">
    <location>
        <begin position="1"/>
        <end position="71"/>
    </location>
</feature>
<feature type="domain" description="Disintegrin" evidence="2">
    <location>
        <begin position="1"/>
        <end position="71"/>
    </location>
</feature>
<feature type="short sequence motif" description="Cell attachment site; atypical (KGD)">
    <location>
        <begin position="51"/>
        <end position="53"/>
    </location>
</feature>
<feature type="disulfide bond" evidence="1">
    <location>
        <begin position="6"/>
        <end position="21"/>
    </location>
</feature>
<feature type="disulfide bond" evidence="1">
    <location>
        <begin position="8"/>
        <end position="16"/>
    </location>
</feature>
<feature type="disulfide bond" evidence="1">
    <location>
        <begin position="15"/>
        <end position="38"/>
    </location>
</feature>
<feature type="disulfide bond" evidence="1">
    <location>
        <begin position="29"/>
        <end position="35"/>
    </location>
</feature>
<feature type="disulfide bond" evidence="1">
    <location>
        <begin position="34"/>
        <end position="59"/>
    </location>
</feature>
<feature type="disulfide bond" evidence="1 2">
    <location>
        <begin position="47"/>
        <end position="66"/>
    </location>
</feature>
<reference key="1">
    <citation type="journal article" date="1999" name="J. Biochem.">
        <title>Ussuristatin 2, a novel KGD-bearing disintegrin from Agkistrodon ussuriensis venom.</title>
        <authorList>
            <person name="Oshikawa K."/>
            <person name="Terada S."/>
        </authorList>
    </citation>
    <scope>PROTEIN SEQUENCE</scope>
    <scope>FUNCTION</scope>
    <scope>SUBUNIT</scope>
    <scope>SUBCELLULAR LOCATION</scope>
    <source>
        <tissue>Venom</tissue>
    </source>
</reference>
<keyword id="KW-1217">Cell adhesion impairing toxin</keyword>
<keyword id="KW-0903">Direct protein sequencing</keyword>
<keyword id="KW-1015">Disulfide bond</keyword>
<keyword id="KW-1199">Hemostasis impairing toxin</keyword>
<keyword id="KW-1201">Platelet aggregation inhibiting toxin</keyword>
<keyword id="KW-0964">Secreted</keyword>
<keyword id="KW-0800">Toxin</keyword>
<accession>Q7LZT4</accession>
<evidence type="ECO:0000250" key="1">
    <source>
        <dbReference type="UniProtKB" id="Q0NZX5"/>
    </source>
</evidence>
<evidence type="ECO:0000255" key="2">
    <source>
        <dbReference type="PROSITE-ProRule" id="PRU00068"/>
    </source>
</evidence>
<evidence type="ECO:0000269" key="3">
    <source>
    </source>
</evidence>
<evidence type="ECO:0000303" key="4">
    <source>
    </source>
</evidence>
<evidence type="ECO:0000305" key="5"/>
<evidence type="ECO:0000305" key="6">
    <source>
    </source>
</evidence>